<evidence type="ECO:0000250" key="1"/>
<evidence type="ECO:0000305" key="2"/>
<sequence>MDADKIVFKVNNQVVSLKPEIIVDQYEYKYPAIKDLKKPCITLGKAPDLNKAYKSALSSMNAVKLDPDDDCSYLAAAMEFFEGTCPEDWTSYGMLIARNRDKITPYSLVEIKRTDVEGNWALTGGMEMTRDPTGSEHTSLVGLLVSLYRLSKISGQNTGNYKTNIADRIEQIFETAPFVKLVEHHTLMTTHKMCANWNTIPNFRVLAGTYDLFFSRIEHLYSAIRVGTVVTAYEDCSGLVSFTGFIKQINLTAREAILYFFHKNFEEEIRRMLEGRQETAVPHSYFIHFRSLGLSGKSPYSSNAVGHLFNLIHFVGCYMGQIRSLNSTVIAACAPHEMSVLGGYLGDEFFGRGTFERRFFRDEKELQEYEAAELTKTDVALADDGTVNSDDEDYFSGEARGPEAVYARIMMNGGRLKRSHIRRYVSVSSNHQARPNSFAEFLNKTYSSDS</sequence>
<name>NCAP_RABVD</name>
<organism>
    <name type="scientific">Rabies virus (strain China/DRV)</name>
    <name type="common">RABV</name>
    <dbReference type="NCBI Taxonomy" id="445792"/>
    <lineage>
        <taxon>Viruses</taxon>
        <taxon>Riboviria</taxon>
        <taxon>Orthornavirae</taxon>
        <taxon>Negarnaviricota</taxon>
        <taxon>Haploviricotina</taxon>
        <taxon>Monjiviricetes</taxon>
        <taxon>Mononegavirales</taxon>
        <taxon>Rhabdoviridae</taxon>
        <taxon>Alpharhabdovirinae</taxon>
        <taxon>Lyssavirus</taxon>
        <taxon>Lyssavirus rabies</taxon>
    </lineage>
</organism>
<comment type="function">
    <text evidence="1">Encapsidates the genome in a ratio of one protein N per nine ribonucleotides, protecting it from nucleases. If expressed without protein P it binds non-specifically RNA and therefore can bind it's own mRNA. Interaction with protein P abolishes any non-specific RNA binding, and prevents phosphorylation. The soluble N-P complex encapsidates specifically the genomic RNA, with protein N protecting the genome like a pearl necklace. The encapsidated genomic RNA is termed the nucleocapsid (NC) and serves as template for viral transcription and replication. Protein N binds protein P in the NC through a different interaction, and can be phosphorylated. Subsequent viral replication is dependent on intracellular concentration of newly synthesized protein N. During replication, encapsidation by protein N is coupled to RNA synthesis and all replicative products are resistant to nucleases (By similarity).</text>
</comment>
<comment type="subunit">
    <text evidence="1">Homomultimerizes to form the nucleocapsid. Binds to viral genomic RNA. In nucleocapsid, binds protein P and thereby positions the polymerase on the template. Protein P acts as a chaperone on free protein N to prevent it from aggregation before encapsidating genomic RNA (By similarity).</text>
</comment>
<comment type="subcellular location">
    <subcellularLocation>
        <location>Virion</location>
    </subcellularLocation>
    <subcellularLocation>
        <location evidence="1">Host cytoplasm</location>
    </subcellularLocation>
</comment>
<comment type="PTM">
    <text evidence="1">Phosphorylated by host CK2. Unphosphorylated protein N seems to have a better affinity for leader viral promoter encapsidation. Phosphorylation of protein N in ribonucleocapsid may stabilize the interaction with protein P, thereby playing an important role in viral transcription/replication (By similarity).</text>
</comment>
<comment type="miscellaneous">
    <text evidence="1">Displays a superantigen activity in human and mouse, activating mostly V-beta-8 subtypes of T-cell receptor.</text>
</comment>
<comment type="similarity">
    <text evidence="2">Belongs to the lyssavirus nucleocapsid protein family.</text>
</comment>
<reference key="1">
    <citation type="submission" date="2006-08" db="EMBL/GenBank/DDBJ databases">
        <authorList>
            <person name="Zhao Y.J."/>
            <person name="Guo L."/>
            <person name="Huang Y."/>
            <person name="Qian A.D."/>
        </authorList>
    </citation>
    <scope>NUCLEOTIDE SEQUENCE [GENOMIC RNA]</scope>
</reference>
<protein>
    <recommendedName>
        <fullName>Nucleoprotein</fullName>
        <shortName>NP</shortName>
    </recommendedName>
    <alternativeName>
        <fullName>Nucleocapsid protein</fullName>
        <shortName>Protein N</shortName>
    </alternativeName>
</protein>
<organismHost>
    <name type="scientific">Homo sapiens</name>
    <name type="common">Human</name>
    <dbReference type="NCBI Taxonomy" id="9606"/>
</organismHost>
<organismHost>
    <name type="scientific">Mammalia</name>
    <dbReference type="NCBI Taxonomy" id="40674"/>
</organismHost>
<proteinExistence type="inferred from homology"/>
<dbReference type="EMBL" id="DQ875051">
    <property type="protein sequence ID" value="ABI47942.1"/>
    <property type="molecule type" value="Genomic_RNA"/>
</dbReference>
<dbReference type="SMR" id="Q0GBX9"/>
<dbReference type="Proteomes" id="UP000008618">
    <property type="component" value="Genome"/>
</dbReference>
<dbReference type="GO" id="GO:0019029">
    <property type="term" value="C:helical viral capsid"/>
    <property type="evidence" value="ECO:0007669"/>
    <property type="project" value="UniProtKB-KW"/>
</dbReference>
<dbReference type="GO" id="GO:0030430">
    <property type="term" value="C:host cell cytoplasm"/>
    <property type="evidence" value="ECO:0007669"/>
    <property type="project" value="UniProtKB-SubCell"/>
</dbReference>
<dbReference type="GO" id="GO:1990904">
    <property type="term" value="C:ribonucleoprotein complex"/>
    <property type="evidence" value="ECO:0007669"/>
    <property type="project" value="UniProtKB-KW"/>
</dbReference>
<dbReference type="GO" id="GO:0019013">
    <property type="term" value="C:viral nucleocapsid"/>
    <property type="evidence" value="ECO:0007669"/>
    <property type="project" value="UniProtKB-KW"/>
</dbReference>
<dbReference type="GO" id="GO:0003723">
    <property type="term" value="F:RNA binding"/>
    <property type="evidence" value="ECO:0007669"/>
    <property type="project" value="UniProtKB-KW"/>
</dbReference>
<dbReference type="Gene3D" id="1.10.3610.10">
    <property type="entry name" value="Nucleoprotein"/>
    <property type="match status" value="1"/>
</dbReference>
<dbReference type="Gene3D" id="1.10.3570.10">
    <property type="entry name" value="Rhabdovirus nucleocapsid protein like domain"/>
    <property type="match status" value="1"/>
</dbReference>
<dbReference type="InterPro" id="IPR000448">
    <property type="entry name" value="Rhabdo_ncapsid"/>
</dbReference>
<dbReference type="InterPro" id="IPR023331">
    <property type="entry name" value="Rhabdovirus_ncapsid_C"/>
</dbReference>
<dbReference type="InterPro" id="IPR023330">
    <property type="entry name" value="Rhabdovirus_ncapsid_N"/>
</dbReference>
<dbReference type="InterPro" id="IPR035961">
    <property type="entry name" value="Rhabdovirus_nucleoprotein-like"/>
</dbReference>
<dbReference type="Pfam" id="PF00945">
    <property type="entry name" value="Rhabdo_ncap"/>
    <property type="match status" value="1"/>
</dbReference>
<dbReference type="SUPFAM" id="SSF140809">
    <property type="entry name" value="Rhabdovirus nucleoprotein-like"/>
    <property type="match status" value="1"/>
</dbReference>
<keyword id="KW-0167">Capsid protein</keyword>
<keyword id="KW-1139">Helical capsid protein</keyword>
<keyword id="KW-1035">Host cytoplasm</keyword>
<keyword id="KW-0597">Phosphoprotein</keyword>
<keyword id="KW-0687">Ribonucleoprotein</keyword>
<keyword id="KW-0694">RNA-binding</keyword>
<keyword id="KW-0766">Superantigen</keyword>
<keyword id="KW-0543">Viral nucleoprotein</keyword>
<keyword id="KW-0946">Virion</keyword>
<feature type="chain" id="PRO_0000295208" description="Nucleoprotein">
    <location>
        <begin position="1"/>
        <end position="450"/>
    </location>
</feature>
<feature type="modified residue" description="Phosphoserine; by host CK2" evidence="1">
    <location>
        <position position="389"/>
    </location>
</feature>
<accession>Q0GBX9</accession>
<gene>
    <name type="primary">N</name>
</gene>